<name>YBGE_ECOL6</name>
<accession>P0AAV1</accession>
<accession>P37343</accession>
<accession>P75755</accession>
<sequence length="97" mass="10932">MSKIIATLYAVMDKRPLRALSFVMALLLAGCMFWDPSRFAAKTSELEIWHGLLLMWAVCAGVIHGVGFRPQKVLWQGIFCPLLADIVLIVGLIFFFF</sequence>
<keyword id="KW-1185">Reference proteome</keyword>
<gene>
    <name type="primary">ybgE</name>
    <name type="ordered locus">c0814</name>
</gene>
<organism>
    <name type="scientific">Escherichia coli O6:H1 (strain CFT073 / ATCC 700928 / UPEC)</name>
    <dbReference type="NCBI Taxonomy" id="199310"/>
    <lineage>
        <taxon>Bacteria</taxon>
        <taxon>Pseudomonadati</taxon>
        <taxon>Pseudomonadota</taxon>
        <taxon>Gammaproteobacteria</taxon>
        <taxon>Enterobacterales</taxon>
        <taxon>Enterobacteriaceae</taxon>
        <taxon>Escherichia</taxon>
    </lineage>
</organism>
<dbReference type="EMBL" id="AE014075">
    <property type="protein sequence ID" value="AAN79287.1"/>
    <property type="molecule type" value="Genomic_DNA"/>
</dbReference>
<dbReference type="RefSeq" id="WP_000034602.1">
    <property type="nucleotide sequence ID" value="NZ_CP051263.1"/>
</dbReference>
<dbReference type="SMR" id="P0AAV1"/>
<dbReference type="STRING" id="199310.c0814"/>
<dbReference type="GeneID" id="93776749"/>
<dbReference type="KEGG" id="ecc:c0814"/>
<dbReference type="eggNOG" id="COG3790">
    <property type="taxonomic scope" value="Bacteria"/>
</dbReference>
<dbReference type="HOGENOM" id="CLU_156555_2_0_6"/>
<dbReference type="BioCyc" id="ECOL199310:C0814-MONOMER"/>
<dbReference type="Proteomes" id="UP000001410">
    <property type="component" value="Chromosome"/>
</dbReference>
<dbReference type="InterPro" id="IPR011846">
    <property type="entry name" value="Cyd_oper_YbgE"/>
</dbReference>
<dbReference type="NCBIfam" id="TIGR02112">
    <property type="entry name" value="cyd_oper_ybgE"/>
    <property type="match status" value="1"/>
</dbReference>
<dbReference type="NCBIfam" id="NF007881">
    <property type="entry name" value="PRK10588.1"/>
    <property type="match status" value="1"/>
</dbReference>
<dbReference type="Pfam" id="PF09600">
    <property type="entry name" value="Cyd_oper_YbgE"/>
    <property type="match status" value="1"/>
</dbReference>
<dbReference type="PROSITE" id="PS51257">
    <property type="entry name" value="PROKAR_LIPOPROTEIN"/>
    <property type="match status" value="1"/>
</dbReference>
<feature type="chain" id="PRO_0000168704" description="Uncharacterized protein YbgE">
    <location>
        <begin position="1"/>
        <end position="97"/>
    </location>
</feature>
<protein>
    <recommendedName>
        <fullName>Uncharacterized protein YbgE</fullName>
    </recommendedName>
</protein>
<reference key="1">
    <citation type="journal article" date="2002" name="Proc. Natl. Acad. Sci. U.S.A.">
        <title>Extensive mosaic structure revealed by the complete genome sequence of uropathogenic Escherichia coli.</title>
        <authorList>
            <person name="Welch R.A."/>
            <person name="Burland V."/>
            <person name="Plunkett G. III"/>
            <person name="Redford P."/>
            <person name="Roesch P."/>
            <person name="Rasko D."/>
            <person name="Buckles E.L."/>
            <person name="Liou S.-R."/>
            <person name="Boutin A."/>
            <person name="Hackett J."/>
            <person name="Stroud D."/>
            <person name="Mayhew G.F."/>
            <person name="Rose D.J."/>
            <person name="Zhou S."/>
            <person name="Schwartz D.C."/>
            <person name="Perna N.T."/>
            <person name="Mobley H.L.T."/>
            <person name="Donnenberg M.S."/>
            <person name="Blattner F.R."/>
        </authorList>
    </citation>
    <scope>NUCLEOTIDE SEQUENCE [LARGE SCALE GENOMIC DNA]</scope>
    <source>
        <strain>CFT073 / ATCC 700928 / UPEC</strain>
    </source>
</reference>
<proteinExistence type="predicted"/>